<reference key="1">
    <citation type="journal article" date="2005" name="PLoS Biol.">
        <title>The genome sequence of Rickettsia felis identifies the first putative conjugative plasmid in an obligate intracellular parasite.</title>
        <authorList>
            <person name="Ogata H."/>
            <person name="Renesto P."/>
            <person name="Audic S."/>
            <person name="Robert C."/>
            <person name="Blanc G."/>
            <person name="Fournier P.-E."/>
            <person name="Parinello H."/>
            <person name="Claverie J.-M."/>
            <person name="Raoult D."/>
        </authorList>
    </citation>
    <scope>NUCLEOTIDE SEQUENCE [LARGE SCALE GENOMIC DNA]</scope>
    <source>
        <strain>ATCC VR-1525 / URRWXCal2</strain>
    </source>
</reference>
<protein>
    <recommendedName>
        <fullName evidence="1">Ubiquinone biosynthesis O-methyltransferase</fullName>
    </recommendedName>
    <alternativeName>
        <fullName evidence="1">2-polyprenyl-6-hydroxyphenol methylase</fullName>
        <ecNumber evidence="1">2.1.1.222</ecNumber>
    </alternativeName>
    <alternativeName>
        <fullName evidence="1">3-demethylubiquinone 3-O-methyltransferase</fullName>
        <ecNumber evidence="1">2.1.1.64</ecNumber>
    </alternativeName>
</protein>
<accession>Q4UME7</accession>
<feature type="chain" id="PRO_0000241732" description="Ubiquinone biosynthesis O-methyltransferase">
    <location>
        <begin position="1"/>
        <end position="244"/>
    </location>
</feature>
<feature type="binding site" evidence="1">
    <location>
        <position position="36"/>
    </location>
    <ligand>
        <name>S-adenosyl-L-methionine</name>
        <dbReference type="ChEBI" id="CHEBI:59789"/>
    </ligand>
</feature>
<feature type="binding site" evidence="1">
    <location>
        <position position="60"/>
    </location>
    <ligand>
        <name>S-adenosyl-L-methionine</name>
        <dbReference type="ChEBI" id="CHEBI:59789"/>
    </ligand>
</feature>
<feature type="binding site" evidence="1">
    <location>
        <position position="81"/>
    </location>
    <ligand>
        <name>S-adenosyl-L-methionine</name>
        <dbReference type="ChEBI" id="CHEBI:59789"/>
    </ligand>
</feature>
<feature type="binding site" evidence="1">
    <location>
        <position position="123"/>
    </location>
    <ligand>
        <name>S-adenosyl-L-methionine</name>
        <dbReference type="ChEBI" id="CHEBI:59789"/>
    </ligand>
</feature>
<sequence length="244" mass="27837">MSSIDKKELEKFEKISHNWWNKDGEFGILHRINPIRLEYIIEKITSHYNDISKLEILDVGCGGGLIATPLAAQGFNVTAIDALQSNIETASTYAKENGVKVNYLQSTIEELQSDKLYDVVICLEVIEHVENVQQFILNLVGHIKPNGMAIISTINRTKKAYVLGIIVAEYVLGWVPKNTHDYSKFLKPSEIYEMLTDTDIEIKELKGLVYDPAKNEWKLSNDIDVNYFMCLGRKTNRHCKEITK</sequence>
<name>UBIG_RICFE</name>
<evidence type="ECO:0000255" key="1">
    <source>
        <dbReference type="HAMAP-Rule" id="MF_00472"/>
    </source>
</evidence>
<comment type="function">
    <text evidence="1">O-methyltransferase that catalyzes the 2 O-methylation steps in the ubiquinone biosynthetic pathway.</text>
</comment>
<comment type="catalytic activity">
    <reaction evidence="1">
        <text>a 3-demethylubiquinol + S-adenosyl-L-methionine = a ubiquinol + S-adenosyl-L-homocysteine + H(+)</text>
        <dbReference type="Rhea" id="RHEA:44380"/>
        <dbReference type="Rhea" id="RHEA-COMP:9566"/>
        <dbReference type="Rhea" id="RHEA-COMP:10914"/>
        <dbReference type="ChEBI" id="CHEBI:15378"/>
        <dbReference type="ChEBI" id="CHEBI:17976"/>
        <dbReference type="ChEBI" id="CHEBI:57856"/>
        <dbReference type="ChEBI" id="CHEBI:59789"/>
        <dbReference type="ChEBI" id="CHEBI:84422"/>
        <dbReference type="EC" id="2.1.1.64"/>
    </reaction>
</comment>
<comment type="catalytic activity">
    <reaction evidence="1">
        <text>a 3-(all-trans-polyprenyl)benzene-1,2-diol + S-adenosyl-L-methionine = a 2-methoxy-6-(all-trans-polyprenyl)phenol + S-adenosyl-L-homocysteine + H(+)</text>
        <dbReference type="Rhea" id="RHEA:31411"/>
        <dbReference type="Rhea" id="RHEA-COMP:9550"/>
        <dbReference type="Rhea" id="RHEA-COMP:9551"/>
        <dbReference type="ChEBI" id="CHEBI:15378"/>
        <dbReference type="ChEBI" id="CHEBI:57856"/>
        <dbReference type="ChEBI" id="CHEBI:59789"/>
        <dbReference type="ChEBI" id="CHEBI:62729"/>
        <dbReference type="ChEBI" id="CHEBI:62731"/>
        <dbReference type="EC" id="2.1.1.222"/>
    </reaction>
</comment>
<comment type="pathway">
    <text evidence="1">Cofactor biosynthesis; ubiquinone biosynthesis.</text>
</comment>
<comment type="similarity">
    <text evidence="1">Belongs to the methyltransferase superfamily. UbiG/COQ3 family.</text>
</comment>
<dbReference type="EC" id="2.1.1.222" evidence="1"/>
<dbReference type="EC" id="2.1.1.64" evidence="1"/>
<dbReference type="EMBL" id="CP000053">
    <property type="protein sequence ID" value="AAY61265.1"/>
    <property type="molecule type" value="Genomic_DNA"/>
</dbReference>
<dbReference type="SMR" id="Q4UME7"/>
<dbReference type="STRING" id="315456.RF_0414"/>
<dbReference type="KEGG" id="rfe:RF_0414"/>
<dbReference type="eggNOG" id="COG2227">
    <property type="taxonomic scope" value="Bacteria"/>
</dbReference>
<dbReference type="HOGENOM" id="CLU_042432_0_0_5"/>
<dbReference type="OrthoDB" id="9801538at2"/>
<dbReference type="UniPathway" id="UPA00232"/>
<dbReference type="Proteomes" id="UP000008548">
    <property type="component" value="Chromosome"/>
</dbReference>
<dbReference type="GO" id="GO:0102208">
    <property type="term" value="F:2-polyprenyl-6-hydroxyphenol methylase activity"/>
    <property type="evidence" value="ECO:0007669"/>
    <property type="project" value="UniProtKB-EC"/>
</dbReference>
<dbReference type="GO" id="GO:0061542">
    <property type="term" value="F:3-demethylubiquinol 3-O-methyltransferase activity"/>
    <property type="evidence" value="ECO:0007669"/>
    <property type="project" value="UniProtKB-UniRule"/>
</dbReference>
<dbReference type="GO" id="GO:0010420">
    <property type="term" value="F:polyprenyldihydroxybenzoate methyltransferase activity"/>
    <property type="evidence" value="ECO:0007669"/>
    <property type="project" value="InterPro"/>
</dbReference>
<dbReference type="GO" id="GO:0032259">
    <property type="term" value="P:methylation"/>
    <property type="evidence" value="ECO:0007669"/>
    <property type="project" value="UniProtKB-KW"/>
</dbReference>
<dbReference type="CDD" id="cd02440">
    <property type="entry name" value="AdoMet_MTases"/>
    <property type="match status" value="1"/>
</dbReference>
<dbReference type="Gene3D" id="3.40.50.150">
    <property type="entry name" value="Vaccinia Virus protein VP39"/>
    <property type="match status" value="1"/>
</dbReference>
<dbReference type="HAMAP" id="MF_00472">
    <property type="entry name" value="UbiG"/>
    <property type="match status" value="1"/>
</dbReference>
<dbReference type="InterPro" id="IPR013216">
    <property type="entry name" value="Methyltransf_11"/>
</dbReference>
<dbReference type="InterPro" id="IPR029063">
    <property type="entry name" value="SAM-dependent_MTases_sf"/>
</dbReference>
<dbReference type="InterPro" id="IPR010233">
    <property type="entry name" value="UbiG_MeTrfase"/>
</dbReference>
<dbReference type="NCBIfam" id="TIGR01983">
    <property type="entry name" value="UbiG"/>
    <property type="match status" value="1"/>
</dbReference>
<dbReference type="PANTHER" id="PTHR43464">
    <property type="entry name" value="METHYLTRANSFERASE"/>
    <property type="match status" value="1"/>
</dbReference>
<dbReference type="PANTHER" id="PTHR43464:SF19">
    <property type="entry name" value="UBIQUINONE BIOSYNTHESIS O-METHYLTRANSFERASE, MITOCHONDRIAL"/>
    <property type="match status" value="1"/>
</dbReference>
<dbReference type="Pfam" id="PF08241">
    <property type="entry name" value="Methyltransf_11"/>
    <property type="match status" value="1"/>
</dbReference>
<dbReference type="SUPFAM" id="SSF53335">
    <property type="entry name" value="S-adenosyl-L-methionine-dependent methyltransferases"/>
    <property type="match status" value="1"/>
</dbReference>
<proteinExistence type="inferred from homology"/>
<keyword id="KW-0489">Methyltransferase</keyword>
<keyword id="KW-0949">S-adenosyl-L-methionine</keyword>
<keyword id="KW-0808">Transferase</keyword>
<keyword id="KW-0831">Ubiquinone biosynthesis</keyword>
<gene>
    <name evidence="1" type="primary">ubiG</name>
    <name type="ordered locus">RF_0414</name>
</gene>
<organism>
    <name type="scientific">Rickettsia felis (strain ATCC VR-1525 / URRWXCal2)</name>
    <name type="common">Rickettsia azadi</name>
    <dbReference type="NCBI Taxonomy" id="315456"/>
    <lineage>
        <taxon>Bacteria</taxon>
        <taxon>Pseudomonadati</taxon>
        <taxon>Pseudomonadota</taxon>
        <taxon>Alphaproteobacteria</taxon>
        <taxon>Rickettsiales</taxon>
        <taxon>Rickettsiaceae</taxon>
        <taxon>Rickettsieae</taxon>
        <taxon>Rickettsia</taxon>
        <taxon>spotted fever group</taxon>
    </lineage>
</organism>